<proteinExistence type="inferred from homology"/>
<organism>
    <name type="scientific">Clavibacter sepedonicus</name>
    <name type="common">Clavibacter michiganensis subsp. sepedonicus</name>
    <dbReference type="NCBI Taxonomy" id="31964"/>
    <lineage>
        <taxon>Bacteria</taxon>
        <taxon>Bacillati</taxon>
        <taxon>Actinomycetota</taxon>
        <taxon>Actinomycetes</taxon>
        <taxon>Micrococcales</taxon>
        <taxon>Microbacteriaceae</taxon>
        <taxon>Clavibacter</taxon>
    </lineage>
</organism>
<keyword id="KW-0067">ATP-binding</keyword>
<keyword id="KW-0963">Cytoplasm</keyword>
<keyword id="KW-1015">Disulfide bond</keyword>
<keyword id="KW-0547">Nucleotide-binding</keyword>
<keyword id="KW-0694">RNA-binding</keyword>
<keyword id="KW-0808">Transferase</keyword>
<keyword id="KW-0819">tRNA processing</keyword>
<keyword id="KW-0820">tRNA-binding</keyword>
<feature type="chain" id="PRO_1000076560" description="tRNA-specific 2-thiouridylase MnmA">
    <location>
        <begin position="1"/>
        <end position="397"/>
    </location>
</feature>
<feature type="region of interest" description="Interaction with tRNA" evidence="1">
    <location>
        <begin position="148"/>
        <end position="150"/>
    </location>
</feature>
<feature type="active site" description="Nucleophile" evidence="1">
    <location>
        <position position="101"/>
    </location>
</feature>
<feature type="active site" description="Cysteine persulfide intermediate" evidence="1">
    <location>
        <position position="199"/>
    </location>
</feature>
<feature type="binding site" evidence="1">
    <location>
        <begin position="6"/>
        <end position="13"/>
    </location>
    <ligand>
        <name>ATP</name>
        <dbReference type="ChEBI" id="CHEBI:30616"/>
    </ligand>
</feature>
<feature type="binding site" evidence="1">
    <location>
        <position position="32"/>
    </location>
    <ligand>
        <name>ATP</name>
        <dbReference type="ChEBI" id="CHEBI:30616"/>
    </ligand>
</feature>
<feature type="binding site" evidence="1">
    <location>
        <position position="125"/>
    </location>
    <ligand>
        <name>ATP</name>
        <dbReference type="ChEBI" id="CHEBI:30616"/>
    </ligand>
</feature>
<feature type="site" description="Interaction with tRNA" evidence="1">
    <location>
        <position position="126"/>
    </location>
</feature>
<feature type="site" description="Interaction with tRNA" evidence="1">
    <location>
        <position position="345"/>
    </location>
</feature>
<feature type="disulfide bond" description="Alternate" evidence="1">
    <location>
        <begin position="101"/>
        <end position="199"/>
    </location>
</feature>
<name>MNMA_CLASE</name>
<comment type="function">
    <text evidence="1">Catalyzes the 2-thiolation of uridine at the wobble position (U34) of tRNA, leading to the formation of s(2)U34.</text>
</comment>
<comment type="catalytic activity">
    <reaction evidence="1">
        <text>S-sulfanyl-L-cysteinyl-[protein] + uridine(34) in tRNA + AH2 + ATP = 2-thiouridine(34) in tRNA + L-cysteinyl-[protein] + A + AMP + diphosphate + H(+)</text>
        <dbReference type="Rhea" id="RHEA:47032"/>
        <dbReference type="Rhea" id="RHEA-COMP:10131"/>
        <dbReference type="Rhea" id="RHEA-COMP:11726"/>
        <dbReference type="Rhea" id="RHEA-COMP:11727"/>
        <dbReference type="Rhea" id="RHEA-COMP:11728"/>
        <dbReference type="ChEBI" id="CHEBI:13193"/>
        <dbReference type="ChEBI" id="CHEBI:15378"/>
        <dbReference type="ChEBI" id="CHEBI:17499"/>
        <dbReference type="ChEBI" id="CHEBI:29950"/>
        <dbReference type="ChEBI" id="CHEBI:30616"/>
        <dbReference type="ChEBI" id="CHEBI:33019"/>
        <dbReference type="ChEBI" id="CHEBI:61963"/>
        <dbReference type="ChEBI" id="CHEBI:65315"/>
        <dbReference type="ChEBI" id="CHEBI:87170"/>
        <dbReference type="ChEBI" id="CHEBI:456215"/>
        <dbReference type="EC" id="2.8.1.13"/>
    </reaction>
</comment>
<comment type="subcellular location">
    <subcellularLocation>
        <location evidence="1">Cytoplasm</location>
    </subcellularLocation>
</comment>
<comment type="similarity">
    <text evidence="1">Belongs to the MnmA/TRMU family.</text>
</comment>
<dbReference type="EC" id="2.8.1.13" evidence="1"/>
<dbReference type="EMBL" id="AM849034">
    <property type="protein sequence ID" value="CAQ01162.1"/>
    <property type="molecule type" value="Genomic_DNA"/>
</dbReference>
<dbReference type="RefSeq" id="WP_012298451.1">
    <property type="nucleotide sequence ID" value="NZ_MZMN01000003.1"/>
</dbReference>
<dbReference type="SMR" id="B0RGA6"/>
<dbReference type="STRING" id="31964.CMS1048"/>
<dbReference type="KEGG" id="cms:CMS1048"/>
<dbReference type="eggNOG" id="COG0482">
    <property type="taxonomic scope" value="Bacteria"/>
</dbReference>
<dbReference type="HOGENOM" id="CLU_035188_0_2_11"/>
<dbReference type="OrthoDB" id="9800696at2"/>
<dbReference type="Proteomes" id="UP000001318">
    <property type="component" value="Chromosome"/>
</dbReference>
<dbReference type="GO" id="GO:0005737">
    <property type="term" value="C:cytoplasm"/>
    <property type="evidence" value="ECO:0007669"/>
    <property type="project" value="UniProtKB-SubCell"/>
</dbReference>
<dbReference type="GO" id="GO:0005524">
    <property type="term" value="F:ATP binding"/>
    <property type="evidence" value="ECO:0007669"/>
    <property type="project" value="UniProtKB-KW"/>
</dbReference>
<dbReference type="GO" id="GO:0000049">
    <property type="term" value="F:tRNA binding"/>
    <property type="evidence" value="ECO:0007669"/>
    <property type="project" value="UniProtKB-KW"/>
</dbReference>
<dbReference type="GO" id="GO:0103016">
    <property type="term" value="F:tRNA-uridine 2-sulfurtransferase activity"/>
    <property type="evidence" value="ECO:0007669"/>
    <property type="project" value="UniProtKB-EC"/>
</dbReference>
<dbReference type="GO" id="GO:0002143">
    <property type="term" value="P:tRNA wobble position uridine thiolation"/>
    <property type="evidence" value="ECO:0007669"/>
    <property type="project" value="TreeGrafter"/>
</dbReference>
<dbReference type="CDD" id="cd01998">
    <property type="entry name" value="MnmA_TRMU-like"/>
    <property type="match status" value="1"/>
</dbReference>
<dbReference type="FunFam" id="2.30.30.280:FF:000001">
    <property type="entry name" value="tRNA-specific 2-thiouridylase MnmA"/>
    <property type="match status" value="1"/>
</dbReference>
<dbReference type="FunFam" id="3.40.50.620:FF:000057">
    <property type="entry name" value="tRNA-specific 2-thiouridylase MnmA"/>
    <property type="match status" value="1"/>
</dbReference>
<dbReference type="Gene3D" id="2.30.30.280">
    <property type="entry name" value="Adenine nucleotide alpha hydrolases-like domains"/>
    <property type="match status" value="1"/>
</dbReference>
<dbReference type="Gene3D" id="3.40.50.620">
    <property type="entry name" value="HUPs"/>
    <property type="match status" value="1"/>
</dbReference>
<dbReference type="Gene3D" id="2.40.30.10">
    <property type="entry name" value="Translation factors"/>
    <property type="match status" value="1"/>
</dbReference>
<dbReference type="HAMAP" id="MF_00144">
    <property type="entry name" value="tRNA_thiouridyl_MnmA"/>
    <property type="match status" value="1"/>
</dbReference>
<dbReference type="InterPro" id="IPR004506">
    <property type="entry name" value="MnmA-like"/>
</dbReference>
<dbReference type="InterPro" id="IPR046885">
    <property type="entry name" value="MnmA-like_C"/>
</dbReference>
<dbReference type="InterPro" id="IPR046884">
    <property type="entry name" value="MnmA-like_central"/>
</dbReference>
<dbReference type="InterPro" id="IPR023382">
    <property type="entry name" value="MnmA-like_central_sf"/>
</dbReference>
<dbReference type="InterPro" id="IPR014729">
    <property type="entry name" value="Rossmann-like_a/b/a_fold"/>
</dbReference>
<dbReference type="NCBIfam" id="NF001138">
    <property type="entry name" value="PRK00143.1"/>
    <property type="match status" value="1"/>
</dbReference>
<dbReference type="NCBIfam" id="TIGR00420">
    <property type="entry name" value="trmU"/>
    <property type="match status" value="1"/>
</dbReference>
<dbReference type="PANTHER" id="PTHR11933:SF5">
    <property type="entry name" value="MITOCHONDRIAL TRNA-SPECIFIC 2-THIOURIDYLASE 1"/>
    <property type="match status" value="1"/>
</dbReference>
<dbReference type="PANTHER" id="PTHR11933">
    <property type="entry name" value="TRNA 5-METHYLAMINOMETHYL-2-THIOURIDYLATE -METHYLTRANSFERASE"/>
    <property type="match status" value="1"/>
</dbReference>
<dbReference type="Pfam" id="PF03054">
    <property type="entry name" value="tRNA_Me_trans"/>
    <property type="match status" value="1"/>
</dbReference>
<dbReference type="Pfam" id="PF20258">
    <property type="entry name" value="tRNA_Me_trans_C"/>
    <property type="match status" value="1"/>
</dbReference>
<dbReference type="Pfam" id="PF20259">
    <property type="entry name" value="tRNA_Me_trans_M"/>
    <property type="match status" value="1"/>
</dbReference>
<dbReference type="SUPFAM" id="SSF52402">
    <property type="entry name" value="Adenine nucleotide alpha hydrolases-like"/>
    <property type="match status" value="1"/>
</dbReference>
<accession>B0RGA6</accession>
<evidence type="ECO:0000255" key="1">
    <source>
        <dbReference type="HAMAP-Rule" id="MF_00144"/>
    </source>
</evidence>
<protein>
    <recommendedName>
        <fullName evidence="1">tRNA-specific 2-thiouridylase MnmA</fullName>
        <ecNumber evidence="1">2.8.1.13</ecNumber>
    </recommendedName>
</protein>
<sequence>MKILAAMSGGVDSAVAAARAVDAGHDVTGVHLALSRMPGTLRTGSRGCCTVEDSMDARRAADLLGIPFYVWDFSERFAADVVDDFVAEYQAGRTPNPCMRCNERIKFAALLEKALDLGFDAVCTGHYADVLPGPDGQPELHRAAAWAKDQSYVLGVLTAEQIAHSYFPLGSTPSKAEVRAEAAARGIQVAQKPDSHDICFIPDGDTRGWLADRVGAEPGDILDGEGNAIGTHQGAAAFTVGQRKGLAIGTPAPDGRPRFVLEIRPKDNTVVVGPQEALAIREIAGSSYTWAGTPPTRPDQPFDCDVQIRAHADPVPARAAVSVVDGSMQLVITPRDPLHGVAPGQTAVVYAGTRVLGQVTIDRTVSAVADARPPVRDAGPADAAPAAAALVGATAGE</sequence>
<gene>
    <name evidence="1" type="primary">mnmA</name>
    <name type="synonym">trmU</name>
    <name type="ordered locus">CMS1048</name>
</gene>
<reference key="1">
    <citation type="journal article" date="2008" name="J. Bacteriol.">
        <title>Genome of the actinomycete plant pathogen Clavibacter michiganensis subsp. sepedonicus suggests recent niche adaptation.</title>
        <authorList>
            <person name="Bentley S.D."/>
            <person name="Corton C."/>
            <person name="Brown S.E."/>
            <person name="Barron A."/>
            <person name="Clark L."/>
            <person name="Doggett J."/>
            <person name="Harris B."/>
            <person name="Ormond D."/>
            <person name="Quail M.A."/>
            <person name="May G."/>
            <person name="Francis D."/>
            <person name="Knudson D."/>
            <person name="Parkhill J."/>
            <person name="Ishimaru C.A."/>
        </authorList>
    </citation>
    <scope>NUCLEOTIDE SEQUENCE [LARGE SCALE GENOMIC DNA]</scope>
    <source>
        <strain>ATCC 33113 / DSM 20744 / JCM 9667 / LMG 2889 / ICMP 2535 / C-1</strain>
    </source>
</reference>